<accession>Q9ABX9</accession>
<sequence length="809" mass="86879">MTLKERCVFKLLTCLTTQHDLRLVLVASAVCLAGCFTTFRLYSRMRGARGVVRAAWLLLTGLVAGSSVWATHFIAMVAFTPGLKTGYSPTGTLLSLMIAALFMASGFAVASAQRSTTNDFAGGVLIGLGVAAMHYMGMSAFVTQGQLVWEHATVGMSAVLGVGGATAALLLAGTARTIRRQAVGGGMLCLGIVMLHFTGMSAITIVPDASLTVPDQLLSGGMLTLAVGSITSMIILGGLGAVAIESQTSRSALERIRRLANAAYEGLVVVQSGRINDANAAFCDLVGAPLAELVGRPLFGEILTFDEADPSREDVRREGRLRPLVGGREIPVEVFSRLMDDGARVETSGLTVLAVRDLRERRAAEEKIRYLAEHDGLTGLLNRNSLQMRLAAAIDRVEASGESLAVICIDLDHFKEANDQHGHLAGDALLVETARRLQSAVQAPSFAARLGGDEFIVVQIAGGDQPAVAAELAGRLIEMLAAPVPFDGQELAMGSSLGVSLYPDDGRTAEALMANADMALYRAKESGRGVYRFFKREMDDTIRERRNLARDLRQGIADNELIVHYQPLARAADGEVCGFEALVRWKHPTRGMIPPLDFIPVAEENGLIEALGDWVLRRACADAAAWEKPLRIAVNLSPIQLHNPALPTLVHEVLITTGLSPSRLELEITESALFKDYQRALDNLRRLKALGVRIAMDDFGTGFSSLSTLQSFPFDKIKIDKSFVENIHRHDRATAIVRAVLGLGRSLEIPVVAEGVETEEQILFLRGEDCAELQGYAIGRPAPVDALTMWTTAGDPGAIAPKSKTRRSA</sequence>
<gene>
    <name type="ordered locus">CC_0091</name>
</gene>
<feature type="chain" id="PRO_0000170473" description="Uncharacterized signaling protein CC_0091">
    <location>
        <begin position="1"/>
        <end position="809"/>
    </location>
</feature>
<feature type="transmembrane region" description="Helical" evidence="3">
    <location>
        <begin position="23"/>
        <end position="43"/>
    </location>
</feature>
<feature type="transmembrane region" description="Helical" evidence="3">
    <location>
        <begin position="57"/>
        <end position="77"/>
    </location>
</feature>
<feature type="transmembrane region" description="Helical" evidence="3">
    <location>
        <begin position="92"/>
        <end position="112"/>
    </location>
</feature>
<feature type="transmembrane region" description="Helical" evidence="3">
    <location>
        <begin position="122"/>
        <end position="142"/>
    </location>
</feature>
<feature type="transmembrane region" description="Helical" evidence="3">
    <location>
        <begin position="152"/>
        <end position="172"/>
    </location>
</feature>
<feature type="transmembrane region" description="Helical" evidence="3">
    <location>
        <begin position="186"/>
        <end position="206"/>
    </location>
</feature>
<feature type="transmembrane region" description="Helical" evidence="3">
    <location>
        <begin position="224"/>
        <end position="244"/>
    </location>
</feature>
<feature type="domain" description="MHYT" evidence="3">
    <location>
        <begin position="19"/>
        <end position="206"/>
    </location>
</feature>
<feature type="domain" description="PAS">
    <location>
        <begin position="254"/>
        <end position="317"/>
    </location>
</feature>
<feature type="domain" description="GGDEF" evidence="2">
    <location>
        <begin position="402"/>
        <end position="536"/>
    </location>
</feature>
<feature type="domain" description="EAL" evidence="1">
    <location>
        <begin position="545"/>
        <end position="795"/>
    </location>
</feature>
<feature type="turn" evidence="5">
    <location>
        <begin position="376"/>
        <end position="378"/>
    </location>
</feature>
<feature type="strand" evidence="5">
    <location>
        <begin position="379"/>
        <end position="381"/>
    </location>
</feature>
<feature type="helix" evidence="5">
    <location>
        <begin position="383"/>
        <end position="400"/>
    </location>
</feature>
<feature type="strand" evidence="5">
    <location>
        <begin position="403"/>
        <end position="411"/>
    </location>
</feature>
<feature type="helix" evidence="5">
    <location>
        <begin position="414"/>
        <end position="421"/>
    </location>
</feature>
<feature type="helix" evidence="5">
    <location>
        <begin position="423"/>
        <end position="440"/>
    </location>
</feature>
<feature type="strand" evidence="5">
    <location>
        <begin position="445"/>
        <end position="451"/>
    </location>
</feature>
<feature type="strand" evidence="5">
    <location>
        <begin position="454"/>
        <end position="461"/>
    </location>
</feature>
<feature type="helix" evidence="5">
    <location>
        <begin position="465"/>
        <end position="479"/>
    </location>
</feature>
<feature type="strand" evidence="5">
    <location>
        <begin position="484"/>
        <end position="486"/>
    </location>
</feature>
<feature type="strand" evidence="5">
    <location>
        <begin position="489"/>
        <end position="491"/>
    </location>
</feature>
<feature type="strand" evidence="5">
    <location>
        <begin position="495"/>
        <end position="501"/>
    </location>
</feature>
<feature type="turn" evidence="5">
    <location>
        <begin position="502"/>
        <end position="505"/>
    </location>
</feature>
<feature type="helix" evidence="5">
    <location>
        <begin position="509"/>
        <end position="526"/>
    </location>
</feature>
<reference key="1">
    <citation type="journal article" date="2001" name="Proc. Natl. Acad. Sci. U.S.A.">
        <title>Complete genome sequence of Caulobacter crescentus.</title>
        <authorList>
            <person name="Nierman W.C."/>
            <person name="Feldblyum T.V."/>
            <person name="Laub M.T."/>
            <person name="Paulsen I.T."/>
            <person name="Nelson K.E."/>
            <person name="Eisen J.A."/>
            <person name="Heidelberg J.F."/>
            <person name="Alley M.R.K."/>
            <person name="Ohta N."/>
            <person name="Maddock J.R."/>
            <person name="Potocka I."/>
            <person name="Nelson W.C."/>
            <person name="Newton A."/>
            <person name="Stephens C."/>
            <person name="Phadke N.D."/>
            <person name="Ely B."/>
            <person name="DeBoy R.T."/>
            <person name="Dodson R.J."/>
            <person name="Durkin A.S."/>
            <person name="Gwinn M.L."/>
            <person name="Haft D.H."/>
            <person name="Kolonay J.F."/>
            <person name="Smit J."/>
            <person name="Craven M.B."/>
            <person name="Khouri H.M."/>
            <person name="Shetty J."/>
            <person name="Berry K.J."/>
            <person name="Utterback T.R."/>
            <person name="Tran K."/>
            <person name="Wolf A.M."/>
            <person name="Vamathevan J.J."/>
            <person name="Ermolaeva M.D."/>
            <person name="White O."/>
            <person name="Salzberg S.L."/>
            <person name="Venter J.C."/>
            <person name="Shapiro L."/>
            <person name="Fraser C.M."/>
        </authorList>
    </citation>
    <scope>NUCLEOTIDE SEQUENCE [LARGE SCALE GENOMIC DNA]</scope>
    <source>
        <strain>ATCC 19089 / CIP 103742 / CB 15</strain>
    </source>
</reference>
<proteinExistence type="evidence at protein level"/>
<organism>
    <name type="scientific">Caulobacter vibrioides (strain ATCC 19089 / CIP 103742 / CB 15)</name>
    <name type="common">Caulobacter crescentus</name>
    <dbReference type="NCBI Taxonomy" id="190650"/>
    <lineage>
        <taxon>Bacteria</taxon>
        <taxon>Pseudomonadati</taxon>
        <taxon>Pseudomonadota</taxon>
        <taxon>Alphaproteobacteria</taxon>
        <taxon>Caulobacterales</taxon>
        <taxon>Caulobacteraceae</taxon>
        <taxon>Caulobacter</taxon>
    </lineage>
</organism>
<protein>
    <recommendedName>
        <fullName>Uncharacterized signaling protein CC_0091</fullName>
    </recommendedName>
</protein>
<dbReference type="EMBL" id="AE005673">
    <property type="protein sequence ID" value="AAK22078.1"/>
    <property type="molecule type" value="Genomic_DNA"/>
</dbReference>
<dbReference type="PIR" id="B87260">
    <property type="entry name" value="B87260"/>
</dbReference>
<dbReference type="RefSeq" id="NP_418910.1">
    <property type="nucleotide sequence ID" value="NC_002696.2"/>
</dbReference>
<dbReference type="RefSeq" id="WP_010917980.1">
    <property type="nucleotide sequence ID" value="NC_002696.2"/>
</dbReference>
<dbReference type="PDB" id="4YME">
    <property type="method" value="X-ray"/>
    <property type="resolution" value="1.40 A"/>
    <property type="chains" value="A=372-528"/>
</dbReference>
<dbReference type="PDBsum" id="4YME"/>
<dbReference type="SMR" id="Q9ABX9"/>
<dbReference type="STRING" id="190650.CC_0091"/>
<dbReference type="EnsemblBacteria" id="AAK22078">
    <property type="protein sequence ID" value="AAK22078"/>
    <property type="gene ID" value="CC_0091"/>
</dbReference>
<dbReference type="KEGG" id="ccr:CC_0091"/>
<dbReference type="PATRIC" id="fig|190650.5.peg.88"/>
<dbReference type="eggNOG" id="COG3300">
    <property type="taxonomic scope" value="Bacteria"/>
</dbReference>
<dbReference type="eggNOG" id="COG5001">
    <property type="taxonomic scope" value="Bacteria"/>
</dbReference>
<dbReference type="HOGENOM" id="CLU_000445_70_49_5"/>
<dbReference type="BioCyc" id="CAULO:CC0091-MONOMER"/>
<dbReference type="EvolutionaryTrace" id="Q9ABX9"/>
<dbReference type="Proteomes" id="UP000001816">
    <property type="component" value="Chromosome"/>
</dbReference>
<dbReference type="GO" id="GO:0005886">
    <property type="term" value="C:plasma membrane"/>
    <property type="evidence" value="ECO:0007669"/>
    <property type="project" value="UniProtKB-SubCell"/>
</dbReference>
<dbReference type="CDD" id="cd01948">
    <property type="entry name" value="EAL"/>
    <property type="match status" value="1"/>
</dbReference>
<dbReference type="CDD" id="cd01949">
    <property type="entry name" value="GGDEF"/>
    <property type="match status" value="1"/>
</dbReference>
<dbReference type="CDD" id="cd00130">
    <property type="entry name" value="PAS"/>
    <property type="match status" value="1"/>
</dbReference>
<dbReference type="FunFam" id="3.20.20.450:FF:000001">
    <property type="entry name" value="Cyclic di-GMP phosphodiesterase yahA"/>
    <property type="match status" value="1"/>
</dbReference>
<dbReference type="Gene3D" id="3.30.70.270">
    <property type="match status" value="1"/>
</dbReference>
<dbReference type="Gene3D" id="3.20.20.450">
    <property type="entry name" value="EAL domain"/>
    <property type="match status" value="1"/>
</dbReference>
<dbReference type="Gene3D" id="3.30.450.20">
    <property type="entry name" value="PAS domain"/>
    <property type="match status" value="1"/>
</dbReference>
<dbReference type="InterPro" id="IPR052155">
    <property type="entry name" value="Biofilm_reg_signaling"/>
</dbReference>
<dbReference type="InterPro" id="IPR001633">
    <property type="entry name" value="EAL_dom"/>
</dbReference>
<dbReference type="InterPro" id="IPR035919">
    <property type="entry name" value="EAL_sf"/>
</dbReference>
<dbReference type="InterPro" id="IPR000160">
    <property type="entry name" value="GGDEF_dom"/>
</dbReference>
<dbReference type="InterPro" id="IPR005330">
    <property type="entry name" value="MHYT_dom"/>
</dbReference>
<dbReference type="InterPro" id="IPR029787">
    <property type="entry name" value="Nucleotide_cyclase"/>
</dbReference>
<dbReference type="InterPro" id="IPR000014">
    <property type="entry name" value="PAS"/>
</dbReference>
<dbReference type="InterPro" id="IPR035965">
    <property type="entry name" value="PAS-like_dom_sf"/>
</dbReference>
<dbReference type="InterPro" id="IPR043128">
    <property type="entry name" value="Rev_trsase/Diguanyl_cyclase"/>
</dbReference>
<dbReference type="NCBIfam" id="TIGR00254">
    <property type="entry name" value="GGDEF"/>
    <property type="match status" value="1"/>
</dbReference>
<dbReference type="NCBIfam" id="TIGR00229">
    <property type="entry name" value="sensory_box"/>
    <property type="match status" value="1"/>
</dbReference>
<dbReference type="PANTHER" id="PTHR44757:SF2">
    <property type="entry name" value="BIOFILM ARCHITECTURE MAINTENANCE PROTEIN MBAA"/>
    <property type="match status" value="1"/>
</dbReference>
<dbReference type="PANTHER" id="PTHR44757">
    <property type="entry name" value="DIGUANYLATE CYCLASE DGCP"/>
    <property type="match status" value="1"/>
</dbReference>
<dbReference type="Pfam" id="PF00563">
    <property type="entry name" value="EAL"/>
    <property type="match status" value="1"/>
</dbReference>
<dbReference type="Pfam" id="PF00990">
    <property type="entry name" value="GGDEF"/>
    <property type="match status" value="1"/>
</dbReference>
<dbReference type="Pfam" id="PF03707">
    <property type="entry name" value="MHYT"/>
    <property type="match status" value="2"/>
</dbReference>
<dbReference type="Pfam" id="PF13188">
    <property type="entry name" value="PAS_8"/>
    <property type="match status" value="1"/>
</dbReference>
<dbReference type="SMART" id="SM00052">
    <property type="entry name" value="EAL"/>
    <property type="match status" value="1"/>
</dbReference>
<dbReference type="SMART" id="SM00267">
    <property type="entry name" value="GGDEF"/>
    <property type="match status" value="1"/>
</dbReference>
<dbReference type="SMART" id="SM00091">
    <property type="entry name" value="PAS"/>
    <property type="match status" value="1"/>
</dbReference>
<dbReference type="SUPFAM" id="SSF141868">
    <property type="entry name" value="EAL domain-like"/>
    <property type="match status" value="1"/>
</dbReference>
<dbReference type="SUPFAM" id="SSF55073">
    <property type="entry name" value="Nucleotide cyclase"/>
    <property type="match status" value="1"/>
</dbReference>
<dbReference type="SUPFAM" id="SSF55785">
    <property type="entry name" value="PYP-like sensor domain (PAS domain)"/>
    <property type="match status" value="1"/>
</dbReference>
<dbReference type="PROSITE" id="PS50883">
    <property type="entry name" value="EAL"/>
    <property type="match status" value="1"/>
</dbReference>
<dbReference type="PROSITE" id="PS50887">
    <property type="entry name" value="GGDEF"/>
    <property type="match status" value="1"/>
</dbReference>
<dbReference type="PROSITE" id="PS50924">
    <property type="entry name" value="MHYT"/>
    <property type="match status" value="1"/>
</dbReference>
<name>Y091_CAUVC</name>
<evidence type="ECO:0000255" key="1">
    <source>
        <dbReference type="PROSITE-ProRule" id="PRU00074"/>
    </source>
</evidence>
<evidence type="ECO:0000255" key="2">
    <source>
        <dbReference type="PROSITE-ProRule" id="PRU00095"/>
    </source>
</evidence>
<evidence type="ECO:0000255" key="3">
    <source>
        <dbReference type="PROSITE-ProRule" id="PRU00244"/>
    </source>
</evidence>
<evidence type="ECO:0000305" key="4"/>
<evidence type="ECO:0007829" key="5">
    <source>
        <dbReference type="PDB" id="4YME"/>
    </source>
</evidence>
<comment type="subcellular location">
    <subcellularLocation>
        <location evidence="4">Cell membrane</location>
        <topology evidence="3">Multi-pass membrane protein</topology>
    </subcellularLocation>
</comment>
<keyword id="KW-0002">3D-structure</keyword>
<keyword id="KW-1003">Cell membrane</keyword>
<keyword id="KW-0472">Membrane</keyword>
<keyword id="KW-1185">Reference proteome</keyword>
<keyword id="KW-0812">Transmembrane</keyword>
<keyword id="KW-1133">Transmembrane helix</keyword>